<reference key="1">
    <citation type="submission" date="1997-02" db="EMBL/GenBank/DDBJ databases">
        <title>Interspecific relationships and molecular divergence of Hamamelis and Liquidambar (Hamamelidaceae).</title>
        <authorList>
            <person name="Li J.-H."/>
            <person name="Bogle A.L."/>
            <person name="Klein A.S."/>
        </authorList>
    </citation>
    <scope>NUCLEOTIDE SEQUENCE [GENOMIC DNA]</scope>
</reference>
<reference key="2">
    <citation type="submission" date="1999-03" db="EMBL/GenBank/DDBJ databases">
        <title>Phylogenetic inference in Altingioideae (Hamamelidaceae) based on matK and its sequences.</title>
        <authorList>
            <person name="Shi S."/>
            <person name="Huang Y."/>
            <person name="Zhang Q."/>
            <person name="Parks C.R."/>
            <person name="Wen J."/>
        </authorList>
    </citation>
    <scope>NUCLEOTIDE SEQUENCE [GENOMIC DNA]</scope>
    <source>
        <strain>121</strain>
        <strain>571</strain>
    </source>
</reference>
<sequence length="503" mass="59100">MEESQGYLELYKSRQHDFLYPLIFQEYIYVLAHDHGLNRSILLENLGSDNKFSSLIVKRLITRMYQQNRLIISANDSNRNPSLGHNKDLYSQIISEGFAVIVEIPFPLRLVSSLERKEIVKSHNLRSIHSVFPFLEDKFLHLNYVSDILIPHPIHLEILVQTLRYWVKDASSLHLLRFFLYEYRNWNSLINPKKSIFVFSKRNQRLFLFLYNSHVYEYESVFVFLRTQSSHLRSTSSGALLERIYFYGKIKHLVEVFANDFQAILWLFKDTFVHYVRYQGKSILASKGTPLLMNKWKYYLVNFWQCNFYVWSQPVRIYINQLSNHSLYFLGYISSVGLNPSVVRNQMLENSFIIDNAIKKFDIIVPIIPLIGSLAKAKFCNVLGHPISKPARADSSDSDIIDRFVRICKNLSHYHSGSSKKKSLYRIKYILRLSCARTLARKHKSPVRAFLKRLGSELLEEFLTEEEQVLSLIVPASSTSRRLYRGRIWYLDIICINDLANHE</sequence>
<keyword id="KW-0150">Chloroplast</keyword>
<keyword id="KW-0507">mRNA processing</keyword>
<keyword id="KW-0934">Plastid</keyword>
<keyword id="KW-0694">RNA-binding</keyword>
<keyword id="KW-0819">tRNA processing</keyword>
<gene>
    <name evidence="1" type="primary">matK</name>
</gene>
<comment type="function">
    <text evidence="1">Usually encoded in the trnK tRNA gene intron. Probably assists in splicing its own and other chloroplast group II introns.</text>
</comment>
<comment type="subcellular location">
    <subcellularLocation>
        <location>Plastid</location>
        <location>Chloroplast</location>
    </subcellularLocation>
</comment>
<comment type="similarity">
    <text evidence="1">Belongs to the intron maturase 2 family. MatK subfamily.</text>
</comment>
<feature type="chain" id="PRO_0000143485" description="Maturase K">
    <location>
        <begin position="1"/>
        <end position="503"/>
    </location>
</feature>
<feature type="sequence conflict" description="In Ref. 1; AAD10957." evidence="2" ref="1">
    <original>R</original>
    <variation>G</variation>
    <location>
        <position position="14"/>
    </location>
</feature>
<feature type="sequence conflict" description="In Ref. 1; AAD10957." evidence="2" ref="1">
    <original>R</original>
    <variation>Q</variation>
    <location>
        <position position="79"/>
    </location>
</feature>
<feature type="sequence conflict" description="In Ref. 1; AAD10957." evidence="2" ref="1">
    <original>S</original>
    <variation>F</variation>
    <location>
        <position position="82"/>
    </location>
</feature>
<feature type="sequence conflict" description="In Ref. 1; AAD10957." evidence="2" ref="1">
    <original>T</original>
    <variation>N</variation>
    <location>
        <position position="227"/>
    </location>
</feature>
<feature type="sequence conflict" description="In Ref. 1; AAD10957." evidence="2" ref="1">
    <original>K</original>
    <variation>R</variation>
    <location>
        <position position="409"/>
    </location>
</feature>
<proteinExistence type="inferred from homology"/>
<evidence type="ECO:0000255" key="1">
    <source>
        <dbReference type="HAMAP-Rule" id="MF_01390"/>
    </source>
</evidence>
<evidence type="ECO:0000305" key="2"/>
<protein>
    <recommendedName>
        <fullName evidence="1">Maturase K</fullName>
    </recommendedName>
    <alternativeName>
        <fullName evidence="1">Intron maturase</fullName>
    </alternativeName>
</protein>
<accession>Q9G0R3</accession>
<accession>O98372</accession>
<name>MATK_LIQST</name>
<geneLocation type="chloroplast"/>
<dbReference type="EMBL" id="AF015652">
    <property type="protein sequence ID" value="AAD10957.1"/>
    <property type="molecule type" value="Genomic_DNA"/>
</dbReference>
<dbReference type="EMBL" id="AF133218">
    <property type="protein sequence ID" value="AAG23346.1"/>
    <property type="molecule type" value="Genomic_DNA"/>
</dbReference>
<dbReference type="EMBL" id="AF133219">
    <property type="protein sequence ID" value="AAG23347.1"/>
    <property type="molecule type" value="Genomic_DNA"/>
</dbReference>
<dbReference type="GO" id="GO:0009507">
    <property type="term" value="C:chloroplast"/>
    <property type="evidence" value="ECO:0007669"/>
    <property type="project" value="UniProtKB-SubCell"/>
</dbReference>
<dbReference type="GO" id="GO:0003723">
    <property type="term" value="F:RNA binding"/>
    <property type="evidence" value="ECO:0007669"/>
    <property type="project" value="UniProtKB-KW"/>
</dbReference>
<dbReference type="GO" id="GO:0006397">
    <property type="term" value="P:mRNA processing"/>
    <property type="evidence" value="ECO:0007669"/>
    <property type="project" value="UniProtKB-KW"/>
</dbReference>
<dbReference type="GO" id="GO:0008380">
    <property type="term" value="P:RNA splicing"/>
    <property type="evidence" value="ECO:0007669"/>
    <property type="project" value="UniProtKB-UniRule"/>
</dbReference>
<dbReference type="GO" id="GO:0008033">
    <property type="term" value="P:tRNA processing"/>
    <property type="evidence" value="ECO:0007669"/>
    <property type="project" value="UniProtKB-KW"/>
</dbReference>
<dbReference type="HAMAP" id="MF_01390">
    <property type="entry name" value="MatK"/>
    <property type="match status" value="1"/>
</dbReference>
<dbReference type="InterPro" id="IPR024937">
    <property type="entry name" value="Domain_X"/>
</dbReference>
<dbReference type="InterPro" id="IPR002866">
    <property type="entry name" value="Maturase_MatK"/>
</dbReference>
<dbReference type="InterPro" id="IPR024942">
    <property type="entry name" value="Maturase_MatK_N"/>
</dbReference>
<dbReference type="PANTHER" id="PTHR34811">
    <property type="entry name" value="MATURASE K"/>
    <property type="match status" value="1"/>
</dbReference>
<dbReference type="PANTHER" id="PTHR34811:SF1">
    <property type="entry name" value="MATURASE K"/>
    <property type="match status" value="1"/>
</dbReference>
<dbReference type="Pfam" id="PF01348">
    <property type="entry name" value="Intron_maturas2"/>
    <property type="match status" value="1"/>
</dbReference>
<dbReference type="Pfam" id="PF01824">
    <property type="entry name" value="MatK_N"/>
    <property type="match status" value="1"/>
</dbReference>
<organism>
    <name type="scientific">Liquidambar styraciflua</name>
    <name type="common">Sweetgum tree</name>
    <name type="synonym">Liquidambar macrophylla</name>
    <dbReference type="NCBI Taxonomy" id="4400"/>
    <lineage>
        <taxon>Eukaryota</taxon>
        <taxon>Viridiplantae</taxon>
        <taxon>Streptophyta</taxon>
        <taxon>Embryophyta</taxon>
        <taxon>Tracheophyta</taxon>
        <taxon>Spermatophyta</taxon>
        <taxon>Magnoliopsida</taxon>
        <taxon>eudicotyledons</taxon>
        <taxon>Gunneridae</taxon>
        <taxon>Pentapetalae</taxon>
        <taxon>Saxifragales</taxon>
        <taxon>Altingiaceae</taxon>
        <taxon>Liquidambar</taxon>
    </lineage>
</organism>